<reference key="1">
    <citation type="submission" date="2007-06" db="EMBL/GenBank/DDBJ databases">
        <authorList>
            <consortium name="NIH - Mammalian Gene Collection (MGC) project"/>
        </authorList>
    </citation>
    <scope>NUCLEOTIDE SEQUENCE [LARGE SCALE MRNA]</scope>
    <source>
        <strain>Hereford</strain>
        <tissue>Fetal muscle</tissue>
    </source>
</reference>
<gene>
    <name type="primary">KCTD5</name>
</gene>
<proteinExistence type="evidence at transcript level"/>
<dbReference type="EMBL" id="BC142481">
    <property type="protein sequence ID" value="AAI42482.1"/>
    <property type="molecule type" value="mRNA"/>
</dbReference>
<dbReference type="RefSeq" id="NP_001096811.1">
    <property type="nucleotide sequence ID" value="NM_001103341.1"/>
</dbReference>
<dbReference type="SMR" id="A5PKG7"/>
<dbReference type="FunCoup" id="A5PKG7">
    <property type="interactions" value="2650"/>
</dbReference>
<dbReference type="STRING" id="9913.ENSBTAP00000069205"/>
<dbReference type="PaxDb" id="9913-ENSBTAP00000001047"/>
<dbReference type="Ensembl" id="ENSBTAT00000001047.6">
    <property type="protein sequence ID" value="ENSBTAP00000001047.4"/>
    <property type="gene ID" value="ENSBTAG00000040575.3"/>
</dbReference>
<dbReference type="GeneID" id="100125308"/>
<dbReference type="KEGG" id="bta:100125308"/>
<dbReference type="CTD" id="54442"/>
<dbReference type="VEuPathDB" id="HostDB:ENSBTAG00000040575"/>
<dbReference type="VGNC" id="VGNC:30513">
    <property type="gene designation" value="KCTD5"/>
</dbReference>
<dbReference type="eggNOG" id="KOG2715">
    <property type="taxonomic scope" value="Eukaryota"/>
</dbReference>
<dbReference type="GeneTree" id="ENSGT00940000160374"/>
<dbReference type="HOGENOM" id="CLU_070830_1_0_1"/>
<dbReference type="InParanoid" id="A5PKG7"/>
<dbReference type="OMA" id="LPGKWVR"/>
<dbReference type="OrthoDB" id="1244179at2759"/>
<dbReference type="TreeFam" id="TF313754"/>
<dbReference type="Proteomes" id="UP000009136">
    <property type="component" value="Chromosome 25"/>
</dbReference>
<dbReference type="Bgee" id="ENSBTAG00000040575">
    <property type="expression patterns" value="Expressed in esophagus and 105 other cell types or tissues"/>
</dbReference>
<dbReference type="GO" id="GO:0031463">
    <property type="term" value="C:Cul3-RING ubiquitin ligase complex"/>
    <property type="evidence" value="ECO:0000318"/>
    <property type="project" value="GO_Central"/>
</dbReference>
<dbReference type="GO" id="GO:0005737">
    <property type="term" value="C:cytoplasm"/>
    <property type="evidence" value="ECO:0000318"/>
    <property type="project" value="GO_Central"/>
</dbReference>
<dbReference type="GO" id="GO:0005829">
    <property type="term" value="C:cytosol"/>
    <property type="evidence" value="ECO:0000250"/>
    <property type="project" value="UniProtKB"/>
</dbReference>
<dbReference type="GO" id="GO:0005634">
    <property type="term" value="C:nucleus"/>
    <property type="evidence" value="ECO:0007669"/>
    <property type="project" value="UniProtKB-SubCell"/>
</dbReference>
<dbReference type="GO" id="GO:0097602">
    <property type="term" value="F:cullin family protein binding"/>
    <property type="evidence" value="ECO:0000318"/>
    <property type="project" value="GO_Central"/>
</dbReference>
<dbReference type="GO" id="GO:0043161">
    <property type="term" value="P:proteasome-mediated ubiquitin-dependent protein catabolic process"/>
    <property type="evidence" value="ECO:0000318"/>
    <property type="project" value="GO_Central"/>
</dbReference>
<dbReference type="GO" id="GO:0051260">
    <property type="term" value="P:protein homooligomerization"/>
    <property type="evidence" value="ECO:0007669"/>
    <property type="project" value="InterPro"/>
</dbReference>
<dbReference type="CDD" id="cd18390">
    <property type="entry name" value="BTB_POZ_KCTD5"/>
    <property type="match status" value="1"/>
</dbReference>
<dbReference type="FunFam" id="3.30.70.2000:FF:000001">
    <property type="entry name" value="Potassium channel tetramerization domain-containing 17"/>
    <property type="match status" value="1"/>
</dbReference>
<dbReference type="FunFam" id="3.30.710.10:FF:000005">
    <property type="entry name" value="Potassium channel tetramerization domain-containing 17"/>
    <property type="match status" value="1"/>
</dbReference>
<dbReference type="Gene3D" id="3.30.70.2000">
    <property type="match status" value="1"/>
</dbReference>
<dbReference type="Gene3D" id="6.10.140.750">
    <property type="match status" value="1"/>
</dbReference>
<dbReference type="Gene3D" id="3.30.710.10">
    <property type="entry name" value="Potassium Channel Kv1.1, Chain A"/>
    <property type="match status" value="1"/>
</dbReference>
<dbReference type="InterPro" id="IPR000210">
    <property type="entry name" value="BTB/POZ_dom"/>
</dbReference>
<dbReference type="InterPro" id="IPR011333">
    <property type="entry name" value="SKP1/BTB/POZ_sf"/>
</dbReference>
<dbReference type="InterPro" id="IPR003131">
    <property type="entry name" value="T1-type_BTB"/>
</dbReference>
<dbReference type="PANTHER" id="PTHR14958:SF12">
    <property type="entry name" value="BTB_POZ DOMAIN-CONTAINING PROTEIN KCTD5"/>
    <property type="match status" value="1"/>
</dbReference>
<dbReference type="PANTHER" id="PTHR14958">
    <property type="entry name" value="POTASSIUM CHANNEL TETRAMERISATION DOMAIN CONTAINING PROTEIN"/>
    <property type="match status" value="1"/>
</dbReference>
<dbReference type="Pfam" id="PF02214">
    <property type="entry name" value="BTB_2"/>
    <property type="match status" value="1"/>
</dbReference>
<dbReference type="SMART" id="SM00225">
    <property type="entry name" value="BTB"/>
    <property type="match status" value="1"/>
</dbReference>
<dbReference type="SUPFAM" id="SSF54695">
    <property type="entry name" value="POZ domain"/>
    <property type="match status" value="1"/>
</dbReference>
<name>KCTD5_BOVIN</name>
<keyword id="KW-0007">Acetylation</keyword>
<keyword id="KW-0963">Cytoplasm</keyword>
<keyword id="KW-0539">Nucleus</keyword>
<keyword id="KW-1185">Reference proteome</keyword>
<evidence type="ECO:0000250" key="1">
    <source>
        <dbReference type="UniProtKB" id="Q8VC57"/>
    </source>
</evidence>
<evidence type="ECO:0000250" key="2">
    <source>
        <dbReference type="UniProtKB" id="Q9NXV2"/>
    </source>
</evidence>
<evidence type="ECO:0000256" key="3">
    <source>
        <dbReference type="SAM" id="MobiDB-lite"/>
    </source>
</evidence>
<accession>A5PKG7</accession>
<comment type="function">
    <text evidence="2">Its interaction with CUL3 suggests that it may act as a substrate adapter in some E3 ligase complex (By similarity). Does not affect the function of Kv channel Kv2.1/KCNB1, Kv1.2/KCNA2, Kv4.2/KCND2 and Kv3.4/KCNC4 (By similarity).</text>
</comment>
<comment type="subunit">
    <text evidence="1 2">Homopentamer (By similarity). Interacts (via C-terminus) with GRASP55/GORASP2 (By similarity). Interacts with CUL3 and with ubiquitinated proteins (By similarity). Interacts with CRY1 (By similarity).</text>
</comment>
<comment type="subcellular location">
    <subcellularLocation>
        <location evidence="2">Cytoplasm</location>
        <location evidence="2">Cytosol</location>
    </subcellularLocation>
    <subcellularLocation>
        <location evidence="2">Cytoplasm</location>
    </subcellularLocation>
    <subcellularLocation>
        <location evidence="2">Nucleus</location>
    </subcellularLocation>
    <text evidence="2">Predominantly cytoplasmic, translocated to the nucleus upon interaction with Rep proteins.</text>
</comment>
<comment type="domain">
    <text evidence="2">The BTB (POZ) domain is atypical and mediates the formation of a homopentamer instead of a homotetramer (By similarity). Homopentamerization is due to the presence of 4 residues in the BTB (POZ) domain: Leu-56, Gly-100, Val-112 and Ala-118 (By similarity).</text>
</comment>
<protein>
    <recommendedName>
        <fullName>BTB/POZ domain-containing protein KCTD5</fullName>
    </recommendedName>
</protein>
<feature type="initiator methionine" description="Removed" evidence="2">
    <location>
        <position position="1"/>
    </location>
</feature>
<feature type="chain" id="PRO_0000390462" description="BTB/POZ domain-containing protein KCTD5">
    <location>
        <begin position="2"/>
        <end position="234"/>
    </location>
</feature>
<feature type="domain" description="BTB">
    <location>
        <begin position="44"/>
        <end position="146"/>
    </location>
</feature>
<feature type="region of interest" description="Disordered" evidence="3">
    <location>
        <begin position="211"/>
        <end position="234"/>
    </location>
</feature>
<feature type="compositionally biased region" description="Basic and acidic residues" evidence="3">
    <location>
        <begin position="220"/>
        <end position="234"/>
    </location>
</feature>
<feature type="modified residue" description="N-acetylalanine" evidence="2">
    <location>
        <position position="2"/>
    </location>
</feature>
<organism>
    <name type="scientific">Bos taurus</name>
    <name type="common">Bovine</name>
    <dbReference type="NCBI Taxonomy" id="9913"/>
    <lineage>
        <taxon>Eukaryota</taxon>
        <taxon>Metazoa</taxon>
        <taxon>Chordata</taxon>
        <taxon>Craniata</taxon>
        <taxon>Vertebrata</taxon>
        <taxon>Euteleostomi</taxon>
        <taxon>Mammalia</taxon>
        <taxon>Eutheria</taxon>
        <taxon>Laurasiatheria</taxon>
        <taxon>Artiodactyla</taxon>
        <taxon>Ruminantia</taxon>
        <taxon>Pecora</taxon>
        <taxon>Bovidae</taxon>
        <taxon>Bovinae</taxon>
        <taxon>Bos</taxon>
    </lineage>
</organism>
<sequence>MAENHCELLPPAPGGLGAGLGGGLCRRCSAGLGALAQRPGSVSKWVRLNVGGTYFLTTRQTLCRDPKSFLYRLCQADPDLDSDKDETGAYLIDRDPTYFGPVLNYLRHGKLVINKDLAEEGVLEEAEFYNITSLIKLVKDKIRERDSKTSQVPLKHVYRVLQCQEEELTQMVSTMSDGWKFEQLVSIGSSYNYGSEDQAEFLCVVSKELHNSPHGPASEPSEKAKILQERGSRM</sequence>